<proteinExistence type="inferred from homology"/>
<comment type="similarity">
    <text evidence="1">Belongs to the bacterial ribosomal protein bL27 family.</text>
</comment>
<feature type="chain" id="PRO_0000181062" description="Large ribosomal subunit protein bL27">
    <location>
        <begin position="1"/>
        <end position="87"/>
    </location>
</feature>
<feature type="region of interest" description="Disordered" evidence="2">
    <location>
        <begin position="1"/>
        <end position="21"/>
    </location>
</feature>
<sequence length="87" mass="9049">MAHKKAGGSSRNGRDSESKRLGVKVYGGQAINAGGIIVRQRGTRMHAGENVGMGKDHTLFALVDGHVKFTTKGAAKKHTVVVVPAAA</sequence>
<keyword id="KW-1185">Reference proteome</keyword>
<keyword id="KW-0687">Ribonucleoprotein</keyword>
<keyword id="KW-0689">Ribosomal protein</keyword>
<protein>
    <recommendedName>
        <fullName evidence="1">Large ribosomal subunit protein bL27</fullName>
    </recommendedName>
    <alternativeName>
        <fullName evidence="3">50S ribosomal protein L27</fullName>
    </alternativeName>
</protein>
<accession>Q62GV3</accession>
<organism>
    <name type="scientific">Burkholderia mallei (strain ATCC 23344)</name>
    <dbReference type="NCBI Taxonomy" id="243160"/>
    <lineage>
        <taxon>Bacteria</taxon>
        <taxon>Pseudomonadati</taxon>
        <taxon>Pseudomonadota</taxon>
        <taxon>Betaproteobacteria</taxon>
        <taxon>Burkholderiales</taxon>
        <taxon>Burkholderiaceae</taxon>
        <taxon>Burkholderia</taxon>
        <taxon>pseudomallei group</taxon>
    </lineage>
</organism>
<evidence type="ECO:0000255" key="1">
    <source>
        <dbReference type="HAMAP-Rule" id="MF_00539"/>
    </source>
</evidence>
<evidence type="ECO:0000256" key="2">
    <source>
        <dbReference type="SAM" id="MobiDB-lite"/>
    </source>
</evidence>
<evidence type="ECO:0000305" key="3"/>
<name>RL27_BURMA</name>
<gene>
    <name evidence="1" type="primary">rpmA</name>
    <name type="ordered locus">BMA2522</name>
</gene>
<reference key="1">
    <citation type="journal article" date="2004" name="Proc. Natl. Acad. Sci. U.S.A.">
        <title>Structural flexibility in the Burkholderia mallei genome.</title>
        <authorList>
            <person name="Nierman W.C."/>
            <person name="DeShazer D."/>
            <person name="Kim H.S."/>
            <person name="Tettelin H."/>
            <person name="Nelson K.E."/>
            <person name="Feldblyum T.V."/>
            <person name="Ulrich R.L."/>
            <person name="Ronning C.M."/>
            <person name="Brinkac L.M."/>
            <person name="Daugherty S.C."/>
            <person name="Davidsen T.D."/>
            <person name="DeBoy R.T."/>
            <person name="Dimitrov G."/>
            <person name="Dodson R.J."/>
            <person name="Durkin A.S."/>
            <person name="Gwinn M.L."/>
            <person name="Haft D.H."/>
            <person name="Khouri H.M."/>
            <person name="Kolonay J.F."/>
            <person name="Madupu R."/>
            <person name="Mohammoud Y."/>
            <person name="Nelson W.C."/>
            <person name="Radune D."/>
            <person name="Romero C.M."/>
            <person name="Sarria S."/>
            <person name="Selengut J."/>
            <person name="Shamblin C."/>
            <person name="Sullivan S.A."/>
            <person name="White O."/>
            <person name="Yu Y."/>
            <person name="Zafar N."/>
            <person name="Zhou L."/>
            <person name="Fraser C.M."/>
        </authorList>
    </citation>
    <scope>NUCLEOTIDE SEQUENCE [LARGE SCALE GENOMIC DNA]</scope>
    <source>
        <strain>ATCC 23344</strain>
    </source>
</reference>
<dbReference type="EMBL" id="CP000010">
    <property type="protein sequence ID" value="AAU50092.1"/>
    <property type="molecule type" value="Genomic_DNA"/>
</dbReference>
<dbReference type="RefSeq" id="WP_004194025.1">
    <property type="nucleotide sequence ID" value="NC_006348.1"/>
</dbReference>
<dbReference type="RefSeq" id="YP_104068.1">
    <property type="nucleotide sequence ID" value="NC_006348.1"/>
</dbReference>
<dbReference type="SMR" id="Q62GV3"/>
<dbReference type="GeneID" id="93061604"/>
<dbReference type="KEGG" id="bma:BMA2522"/>
<dbReference type="PATRIC" id="fig|243160.12.peg.2602"/>
<dbReference type="eggNOG" id="COG0211">
    <property type="taxonomic scope" value="Bacteria"/>
</dbReference>
<dbReference type="HOGENOM" id="CLU_095424_4_1_4"/>
<dbReference type="Proteomes" id="UP000006693">
    <property type="component" value="Chromosome 1"/>
</dbReference>
<dbReference type="GO" id="GO:0022625">
    <property type="term" value="C:cytosolic large ribosomal subunit"/>
    <property type="evidence" value="ECO:0007669"/>
    <property type="project" value="TreeGrafter"/>
</dbReference>
<dbReference type="GO" id="GO:0003735">
    <property type="term" value="F:structural constituent of ribosome"/>
    <property type="evidence" value="ECO:0007669"/>
    <property type="project" value="InterPro"/>
</dbReference>
<dbReference type="GO" id="GO:0006412">
    <property type="term" value="P:translation"/>
    <property type="evidence" value="ECO:0007669"/>
    <property type="project" value="UniProtKB-UniRule"/>
</dbReference>
<dbReference type="FunFam" id="2.40.50.100:FF:000001">
    <property type="entry name" value="50S ribosomal protein L27"/>
    <property type="match status" value="1"/>
</dbReference>
<dbReference type="Gene3D" id="2.40.50.100">
    <property type="match status" value="1"/>
</dbReference>
<dbReference type="HAMAP" id="MF_00539">
    <property type="entry name" value="Ribosomal_bL27"/>
    <property type="match status" value="1"/>
</dbReference>
<dbReference type="InterPro" id="IPR001684">
    <property type="entry name" value="Ribosomal_bL27"/>
</dbReference>
<dbReference type="InterPro" id="IPR018261">
    <property type="entry name" value="Ribosomal_bL27_CS"/>
</dbReference>
<dbReference type="NCBIfam" id="TIGR00062">
    <property type="entry name" value="L27"/>
    <property type="match status" value="1"/>
</dbReference>
<dbReference type="PANTHER" id="PTHR15893:SF0">
    <property type="entry name" value="LARGE RIBOSOMAL SUBUNIT PROTEIN BL27M"/>
    <property type="match status" value="1"/>
</dbReference>
<dbReference type="PANTHER" id="PTHR15893">
    <property type="entry name" value="RIBOSOMAL PROTEIN L27"/>
    <property type="match status" value="1"/>
</dbReference>
<dbReference type="Pfam" id="PF01016">
    <property type="entry name" value="Ribosomal_L27"/>
    <property type="match status" value="1"/>
</dbReference>
<dbReference type="PRINTS" id="PR00063">
    <property type="entry name" value="RIBOSOMALL27"/>
</dbReference>
<dbReference type="SUPFAM" id="SSF110324">
    <property type="entry name" value="Ribosomal L27 protein-like"/>
    <property type="match status" value="1"/>
</dbReference>
<dbReference type="PROSITE" id="PS00831">
    <property type="entry name" value="RIBOSOMAL_L27"/>
    <property type="match status" value="1"/>
</dbReference>